<name>GIP3_PHYIN</name>
<accession>B1AC88</accession>
<reference key="1">
    <citation type="journal article" date="2008" name="Mol. Plant Microbe Interact.">
        <title>Structure of the glucanase inhibitor protein (GIP) family from phytophthora species suggests coevolution with plant endo-beta-1,3-glucanases.</title>
        <authorList>
            <person name="Damasceno C.M."/>
            <person name="Bishop J.G."/>
            <person name="Ripoll D.R."/>
            <person name="Win J."/>
            <person name="Kamoun S."/>
            <person name="Rose J.K."/>
        </authorList>
    </citation>
    <scope>NUCLEOTIDE SEQUENCE [GENOMIC DNA]</scope>
    <scope>FUNCTION</scope>
    <scope>SUBCELLULAR LOCATION</scope>
    <scope>INDUCTION</scope>
    <scope>INTERACTION WITH HOST ENDOGLUCANASES</scope>
    <source>
        <strain>US970001</strain>
    </source>
</reference>
<evidence type="ECO:0000255" key="1"/>
<evidence type="ECO:0000255" key="2">
    <source>
        <dbReference type="PROSITE-ProRule" id="PRU00274"/>
    </source>
</evidence>
<evidence type="ECO:0000255" key="3">
    <source>
        <dbReference type="PROSITE-ProRule" id="PRU00498"/>
    </source>
</evidence>
<evidence type="ECO:0000269" key="4">
    <source>
    </source>
</evidence>
<evidence type="ECO:0000303" key="5">
    <source>
    </source>
</evidence>
<evidence type="ECO:0000305" key="6"/>
<evidence type="ECO:0000305" key="7">
    <source>
    </source>
</evidence>
<proteinExistence type="evidence at protein level"/>
<comment type="function">
    <text evidence="4">Secreted effector that suppresses host plant glucan elicitor-mediated defense responses (PubMed:18624645). Targets host endoglucanases and inhibits the endoglucanase-mediated release of elicitor-active glucan oligosaccharides from P.infestans cell walls (PubMed:18624645).</text>
</comment>
<comment type="subunit">
    <text evidence="4">Forms an apoplastic complex with host endoglucanases in tomato leaves during P.infestans infection.</text>
</comment>
<comment type="subcellular location">
    <subcellularLocation>
        <location evidence="4">Secreted</location>
    </subcellularLocation>
</comment>
<comment type="induction">
    <text evidence="4">Expressed during infection and the expression levels increase with disease progression.</text>
</comment>
<comment type="similarity">
    <text evidence="6">Belongs to the peptidase S1 family.</text>
</comment>
<comment type="caution">
    <text evidence="7">None of the predicted glucanase inhibitor proteins (GIPS) has an intact catalytic triad, therefore, GIPs are proteolytically inactive.</text>
</comment>
<sequence length="258" mass="27125">MKIISAVAASSIALGAVSATTDHVSRMLVLGGAVVPSGTKTYTTGIRPTIDGDNFCGGSLISPTHVLTTTACLRGIKPPNWVSVGTHYLNGTHDGEQIKVVAAQNHTNFNSTSGSFDVALLTLEKPSRFKPVKLPAADDSDIVAGMWSKLVGWGYTGYPEKTKAYELQGVSLQVWDNEQCGQLYPVDDTMVCAGGVKGKDSCDGDTGGPLIKERGPGDEDDIVVGLVSWGSECGVGYPGVYSRVSKALEWINSITKGK</sequence>
<gene>
    <name evidence="5" type="primary">GIP3</name>
</gene>
<dbReference type="EMBL" id="EU443393">
    <property type="protein sequence ID" value="ACA23211.1"/>
    <property type="molecule type" value="Genomic_DNA"/>
</dbReference>
<dbReference type="SMR" id="B1AC88"/>
<dbReference type="GlyCosmos" id="B1AC88">
    <property type="glycosylation" value="3 sites, No reported glycans"/>
</dbReference>
<dbReference type="VEuPathDB" id="FungiDB:PITG_13671"/>
<dbReference type="OMA" id="GWGQTCP"/>
<dbReference type="GO" id="GO:0005576">
    <property type="term" value="C:extracellular region"/>
    <property type="evidence" value="ECO:0007669"/>
    <property type="project" value="UniProtKB-SubCell"/>
</dbReference>
<dbReference type="GO" id="GO:0004252">
    <property type="term" value="F:serine-type endopeptidase activity"/>
    <property type="evidence" value="ECO:0007669"/>
    <property type="project" value="InterPro"/>
</dbReference>
<dbReference type="GO" id="GO:0006508">
    <property type="term" value="P:proteolysis"/>
    <property type="evidence" value="ECO:0007669"/>
    <property type="project" value="InterPro"/>
</dbReference>
<dbReference type="CDD" id="cd00190">
    <property type="entry name" value="Tryp_SPc"/>
    <property type="match status" value="1"/>
</dbReference>
<dbReference type="FunFam" id="2.40.10.10:FF:000156">
    <property type="entry name" value="MIP06385p"/>
    <property type="match status" value="1"/>
</dbReference>
<dbReference type="Gene3D" id="2.40.10.10">
    <property type="entry name" value="Trypsin-like serine proteases"/>
    <property type="match status" value="1"/>
</dbReference>
<dbReference type="InterPro" id="IPR050430">
    <property type="entry name" value="Peptidase_S1"/>
</dbReference>
<dbReference type="InterPro" id="IPR009003">
    <property type="entry name" value="Peptidase_S1_PA"/>
</dbReference>
<dbReference type="InterPro" id="IPR043504">
    <property type="entry name" value="Peptidase_S1_PA_chymotrypsin"/>
</dbReference>
<dbReference type="InterPro" id="IPR001314">
    <property type="entry name" value="Peptidase_S1A"/>
</dbReference>
<dbReference type="InterPro" id="IPR001254">
    <property type="entry name" value="Trypsin_dom"/>
</dbReference>
<dbReference type="PANTHER" id="PTHR24276:SF98">
    <property type="entry name" value="FI18310P1-RELATED"/>
    <property type="match status" value="1"/>
</dbReference>
<dbReference type="PANTHER" id="PTHR24276">
    <property type="entry name" value="POLYSERASE-RELATED"/>
    <property type="match status" value="1"/>
</dbReference>
<dbReference type="Pfam" id="PF00089">
    <property type="entry name" value="Trypsin"/>
    <property type="match status" value="1"/>
</dbReference>
<dbReference type="PRINTS" id="PR00722">
    <property type="entry name" value="CHYMOTRYPSIN"/>
</dbReference>
<dbReference type="SMART" id="SM00020">
    <property type="entry name" value="Tryp_SPc"/>
    <property type="match status" value="1"/>
</dbReference>
<dbReference type="SUPFAM" id="SSF50494">
    <property type="entry name" value="Trypsin-like serine proteases"/>
    <property type="match status" value="1"/>
</dbReference>
<dbReference type="PROSITE" id="PS50240">
    <property type="entry name" value="TRYPSIN_DOM"/>
    <property type="match status" value="1"/>
</dbReference>
<organism>
    <name type="scientific">Phytophthora infestans</name>
    <name type="common">Potato late blight agent</name>
    <name type="synonym">Botrytis infestans</name>
    <dbReference type="NCBI Taxonomy" id="4787"/>
    <lineage>
        <taxon>Eukaryota</taxon>
        <taxon>Sar</taxon>
        <taxon>Stramenopiles</taxon>
        <taxon>Oomycota</taxon>
        <taxon>Peronosporales</taxon>
        <taxon>Peronosporaceae</taxon>
        <taxon>Phytophthora</taxon>
    </lineage>
</organism>
<keyword id="KW-1015">Disulfide bond</keyword>
<keyword id="KW-0325">Glycoprotein</keyword>
<keyword id="KW-0964">Secreted</keyword>
<keyword id="KW-0732">Signal</keyword>
<keyword id="KW-0843">Virulence</keyword>
<feature type="signal peptide" evidence="1">
    <location>
        <begin position="1"/>
        <end position="19"/>
    </location>
</feature>
<feature type="chain" id="PRO_5002759699" description="Glucanase inhibitor protein 3" evidence="1">
    <location>
        <begin position="20"/>
        <end position="258"/>
    </location>
</feature>
<feature type="domain" description="Peptidase S1" evidence="2">
    <location>
        <begin position="29"/>
        <end position="256"/>
    </location>
</feature>
<feature type="glycosylation site" description="N-linked (GlcNAc...) asparagine" evidence="3">
    <location>
        <position position="90"/>
    </location>
</feature>
<feature type="glycosylation site" description="N-linked (GlcNAc...) asparagine" evidence="3">
    <location>
        <position position="105"/>
    </location>
</feature>
<feature type="glycosylation site" description="N-linked (GlcNAc...) asparagine" evidence="3">
    <location>
        <position position="110"/>
    </location>
</feature>
<feature type="disulfide bond" evidence="2">
    <location>
        <begin position="56"/>
        <end position="72"/>
    </location>
</feature>
<feature type="disulfide bond" evidence="2">
    <location>
        <begin position="180"/>
        <end position="192"/>
    </location>
</feature>
<feature type="disulfide bond" evidence="2">
    <location>
        <begin position="202"/>
        <end position="233"/>
    </location>
</feature>
<protein>
    <recommendedName>
        <fullName evidence="5">Glucanase inhibitor protein 3</fullName>
    </recommendedName>
</protein>